<keyword id="KW-0256">Endoplasmic reticulum</keyword>
<keyword id="KW-0443">Lipid metabolism</keyword>
<keyword id="KW-0472">Membrane</keyword>
<keyword id="KW-1185">Reference proteome</keyword>
<keyword id="KW-0812">Transmembrane</keyword>
<keyword id="KW-1133">Transmembrane helix</keyword>
<reference key="1">
    <citation type="journal article" date="2000" name="Nature">
        <title>Sequence and analysis of chromosome 1 of the plant Arabidopsis thaliana.</title>
        <authorList>
            <person name="Theologis A."/>
            <person name="Ecker J.R."/>
            <person name="Palm C.J."/>
            <person name="Federspiel N.A."/>
            <person name="Kaul S."/>
            <person name="White O."/>
            <person name="Alonso J."/>
            <person name="Altafi H."/>
            <person name="Araujo R."/>
            <person name="Bowman C.L."/>
            <person name="Brooks S.Y."/>
            <person name="Buehler E."/>
            <person name="Chan A."/>
            <person name="Chao Q."/>
            <person name="Chen H."/>
            <person name="Cheuk R.F."/>
            <person name="Chin C.W."/>
            <person name="Chung M.K."/>
            <person name="Conn L."/>
            <person name="Conway A.B."/>
            <person name="Conway A.R."/>
            <person name="Creasy T.H."/>
            <person name="Dewar K."/>
            <person name="Dunn P."/>
            <person name="Etgu P."/>
            <person name="Feldblyum T.V."/>
            <person name="Feng J.-D."/>
            <person name="Fong B."/>
            <person name="Fujii C.Y."/>
            <person name="Gill J.E."/>
            <person name="Goldsmith A.D."/>
            <person name="Haas B."/>
            <person name="Hansen N.F."/>
            <person name="Hughes B."/>
            <person name="Huizar L."/>
            <person name="Hunter J.L."/>
            <person name="Jenkins J."/>
            <person name="Johnson-Hopson C."/>
            <person name="Khan S."/>
            <person name="Khaykin E."/>
            <person name="Kim C.J."/>
            <person name="Koo H.L."/>
            <person name="Kremenetskaia I."/>
            <person name="Kurtz D.B."/>
            <person name="Kwan A."/>
            <person name="Lam B."/>
            <person name="Langin-Hooper S."/>
            <person name="Lee A."/>
            <person name="Lee J.M."/>
            <person name="Lenz C.A."/>
            <person name="Li J.H."/>
            <person name="Li Y.-P."/>
            <person name="Lin X."/>
            <person name="Liu S.X."/>
            <person name="Liu Z.A."/>
            <person name="Luros J.S."/>
            <person name="Maiti R."/>
            <person name="Marziali A."/>
            <person name="Militscher J."/>
            <person name="Miranda M."/>
            <person name="Nguyen M."/>
            <person name="Nierman W.C."/>
            <person name="Osborne B.I."/>
            <person name="Pai G."/>
            <person name="Peterson J."/>
            <person name="Pham P.K."/>
            <person name="Rizzo M."/>
            <person name="Rooney T."/>
            <person name="Rowley D."/>
            <person name="Sakano H."/>
            <person name="Salzberg S.L."/>
            <person name="Schwartz J.R."/>
            <person name="Shinn P."/>
            <person name="Southwick A.M."/>
            <person name="Sun H."/>
            <person name="Tallon L.J."/>
            <person name="Tambunga G."/>
            <person name="Toriumi M.J."/>
            <person name="Town C.D."/>
            <person name="Utterback T."/>
            <person name="Van Aken S."/>
            <person name="Vaysberg M."/>
            <person name="Vysotskaia V.S."/>
            <person name="Walker M."/>
            <person name="Wu D."/>
            <person name="Yu G."/>
            <person name="Fraser C.M."/>
            <person name="Venter J.C."/>
            <person name="Davis R.W."/>
        </authorList>
    </citation>
    <scope>NUCLEOTIDE SEQUENCE [LARGE SCALE GENOMIC DNA]</scope>
    <source>
        <strain>cv. Columbia</strain>
    </source>
</reference>
<reference key="2">
    <citation type="journal article" date="2017" name="Plant J.">
        <title>Araport11: a complete reannotation of the Arabidopsis thaliana reference genome.</title>
        <authorList>
            <person name="Cheng C.Y."/>
            <person name="Krishnakumar V."/>
            <person name="Chan A.P."/>
            <person name="Thibaud-Nissen F."/>
            <person name="Schobel S."/>
            <person name="Town C.D."/>
        </authorList>
    </citation>
    <scope>GENOME REANNOTATION</scope>
    <source>
        <strain>cv. Columbia</strain>
    </source>
</reference>
<reference key="3">
    <citation type="journal article" date="2015" name="Plant Cell">
        <title>Arabidopsis SEIPIN proteins modulate triacylglycerol accumulation and influence lipid droplet proliferation.</title>
        <authorList>
            <person name="Cai Y."/>
            <person name="Goodman J.M."/>
            <person name="Pyc M."/>
            <person name="Mullen R.T."/>
            <person name="Dyer J.M."/>
            <person name="Chapman K.D."/>
        </authorList>
    </citation>
    <scope>FUNCTION</scope>
    <scope>SUBCELLULAR LOCATION</scope>
    <scope>TISSUE SPECIFICITY</scope>
</reference>
<feature type="chain" id="PRO_0000434816" description="Seipin-2">
    <location>
        <begin position="1"/>
        <end position="526"/>
    </location>
</feature>
<feature type="transmembrane region" description="Helical" evidence="1">
    <location>
        <begin position="195"/>
        <end position="215"/>
    </location>
</feature>
<feature type="transmembrane region" description="Helical" evidence="1">
    <location>
        <begin position="224"/>
        <end position="243"/>
    </location>
</feature>
<feature type="transmembrane region" description="Helical" evidence="1">
    <location>
        <begin position="258"/>
        <end position="278"/>
    </location>
</feature>
<feature type="transmembrane region" description="Helical" evidence="1">
    <location>
        <begin position="483"/>
        <end position="503"/>
    </location>
</feature>
<feature type="region of interest" description="Disordered" evidence="2">
    <location>
        <begin position="33"/>
        <end position="77"/>
    </location>
</feature>
<feature type="compositionally biased region" description="Low complexity" evidence="2">
    <location>
        <begin position="58"/>
        <end position="70"/>
    </location>
</feature>
<organism evidence="8">
    <name type="scientific">Arabidopsis thaliana</name>
    <name type="common">Mouse-ear cress</name>
    <dbReference type="NCBI Taxonomy" id="3702"/>
    <lineage>
        <taxon>Eukaryota</taxon>
        <taxon>Viridiplantae</taxon>
        <taxon>Streptophyta</taxon>
        <taxon>Embryophyta</taxon>
        <taxon>Tracheophyta</taxon>
        <taxon>Spermatophyta</taxon>
        <taxon>Magnoliopsida</taxon>
        <taxon>eudicotyledons</taxon>
        <taxon>Gunneridae</taxon>
        <taxon>Pentapetalae</taxon>
        <taxon>rosids</taxon>
        <taxon>malvids</taxon>
        <taxon>Brassicales</taxon>
        <taxon>Brassicaceae</taxon>
        <taxon>Camelineae</taxon>
        <taxon>Arabidopsis</taxon>
    </lineage>
</organism>
<protein>
    <recommendedName>
        <fullName evidence="4">Seipin-2</fullName>
        <shortName evidence="4">AtSEIPIN2</shortName>
    </recommendedName>
</protein>
<dbReference type="EMBL" id="AC008030">
    <property type="protein sequence ID" value="AAG10618.1"/>
    <property type="status" value="ALT_SEQ"/>
    <property type="molecule type" value="Genomic_DNA"/>
</dbReference>
<dbReference type="EMBL" id="CP002684">
    <property type="protein sequence ID" value="AEE31126.1"/>
    <property type="molecule type" value="Genomic_DNA"/>
</dbReference>
<dbReference type="PIR" id="B86421">
    <property type="entry name" value="B86421"/>
</dbReference>
<dbReference type="RefSeq" id="NP_174269.1">
    <property type="nucleotide sequence ID" value="NM_102716.4"/>
</dbReference>
<dbReference type="FunCoup" id="F4I340">
    <property type="interactions" value="1051"/>
</dbReference>
<dbReference type="STRING" id="3702.F4I340"/>
<dbReference type="PaxDb" id="3702-AT1G29760.1"/>
<dbReference type="ProteomicsDB" id="232971"/>
<dbReference type="EnsemblPlants" id="AT1G29760.1">
    <property type="protein sequence ID" value="AT1G29760.1"/>
    <property type="gene ID" value="AT1G29760"/>
</dbReference>
<dbReference type="GeneID" id="839854"/>
<dbReference type="Gramene" id="AT1G29760.1">
    <property type="protein sequence ID" value="AT1G29760.1"/>
    <property type="gene ID" value="AT1G29760"/>
</dbReference>
<dbReference type="KEGG" id="ath:AT1G29760"/>
<dbReference type="Araport" id="AT1G29760"/>
<dbReference type="TAIR" id="AT1G29760">
    <property type="gene designation" value="SEIPIN2"/>
</dbReference>
<dbReference type="eggNOG" id="KOG4200">
    <property type="taxonomic scope" value="Eukaryota"/>
</dbReference>
<dbReference type="HOGENOM" id="CLU_035656_1_1_1"/>
<dbReference type="InParanoid" id="F4I340"/>
<dbReference type="OMA" id="WNVAFRC"/>
<dbReference type="OrthoDB" id="3990054at2759"/>
<dbReference type="PRO" id="PR:F4I340"/>
<dbReference type="Proteomes" id="UP000006548">
    <property type="component" value="Chromosome 1"/>
</dbReference>
<dbReference type="ExpressionAtlas" id="F4I340">
    <property type="expression patterns" value="baseline and differential"/>
</dbReference>
<dbReference type="GO" id="GO:0005783">
    <property type="term" value="C:endoplasmic reticulum"/>
    <property type="evidence" value="ECO:0000314"/>
    <property type="project" value="UniProtKB"/>
</dbReference>
<dbReference type="GO" id="GO:0005789">
    <property type="term" value="C:endoplasmic reticulum membrane"/>
    <property type="evidence" value="ECO:0007669"/>
    <property type="project" value="UniProtKB-SubCell"/>
</dbReference>
<dbReference type="GO" id="GO:0140042">
    <property type="term" value="P:lipid droplet formation"/>
    <property type="evidence" value="ECO:0000316"/>
    <property type="project" value="TAIR"/>
</dbReference>
<dbReference type="GO" id="GO:0034389">
    <property type="term" value="P:lipid droplet organization"/>
    <property type="evidence" value="ECO:0000315"/>
    <property type="project" value="UniProtKB"/>
</dbReference>
<dbReference type="GO" id="GO:0006629">
    <property type="term" value="P:lipid metabolic process"/>
    <property type="evidence" value="ECO:0007669"/>
    <property type="project" value="UniProtKB-KW"/>
</dbReference>
<dbReference type="GO" id="GO:0009846">
    <property type="term" value="P:pollen germination"/>
    <property type="evidence" value="ECO:0000316"/>
    <property type="project" value="TAIR"/>
</dbReference>
<dbReference type="GO" id="GO:0080155">
    <property type="term" value="P:regulation of double fertilization forming a zygote and endosperm"/>
    <property type="evidence" value="ECO:0000316"/>
    <property type="project" value="TAIR"/>
</dbReference>
<dbReference type="GO" id="GO:0010162">
    <property type="term" value="P:seed dormancy process"/>
    <property type="evidence" value="ECO:0000316"/>
    <property type="project" value="TAIR"/>
</dbReference>
<dbReference type="CDD" id="cd23995">
    <property type="entry name" value="Seipin_BSCL2_like"/>
    <property type="match status" value="1"/>
</dbReference>
<dbReference type="InterPro" id="IPR009617">
    <property type="entry name" value="Seipin"/>
</dbReference>
<dbReference type="PANTHER" id="PTHR21212">
    <property type="entry name" value="BERNARDINELLI-SEIP CONGENITAL LIPODYSTROPHY 2 HOMOLOG BSCL2 PROTEIN"/>
    <property type="match status" value="1"/>
</dbReference>
<dbReference type="PANTHER" id="PTHR21212:SF0">
    <property type="entry name" value="SEIPIN"/>
    <property type="match status" value="1"/>
</dbReference>
<dbReference type="Pfam" id="PF06775">
    <property type="entry name" value="Seipin"/>
    <property type="match status" value="1"/>
</dbReference>
<sequence length="526" mass="59677">MDSESESESNPSTTDEFDRFLDAPDEFYYDCLPIRSNSHQPSSLLRRRKSAHRRDLISSDIETEPSSSSDGFDVGEKSSYVEKNAELRGDIDTSDVIESTKDSIDLSSEKENDLDVISSSGNDMDVIDSGRNRVDPFQEESTVTTVSSDDQGDDDYAGSVPQFREPPNSTEWSLLGFLVGLVIKAIEFQVSFMTSLLTFPPWLLRNCFLFFFDPFSTIRFGRRFLMARVAGISDMIFGYMNPFRLKDTKQMLSIVCKFGWGMFWAVYVGIVLFGLLVSSLMIGGYVINRIADKPFEVKETLNFDYTKNSPEAYVPISSCAGVECEGSCKESNEMSKIRGLRVIPRDQKLDIILSMTLPESAYNKNLGMFQVRVDFLSVDGQTIASIRRPCMLRFRSEPIRLVQTFFKVVPLVTGYVSEIQTLSLKLKGFVEKDIPTACLKIIIEQRAEFRPGAGIPELYDASLSVESGLPFFRKIIWKWRKTLFVWISMSLFITELLFTLVCCRPLIIPRTQPRDRSPSNPTGVWR</sequence>
<evidence type="ECO:0000255" key="1"/>
<evidence type="ECO:0000256" key="2">
    <source>
        <dbReference type="SAM" id="MobiDB-lite"/>
    </source>
</evidence>
<evidence type="ECO:0000269" key="3">
    <source>
    </source>
</evidence>
<evidence type="ECO:0000303" key="4">
    <source>
    </source>
</evidence>
<evidence type="ECO:0000305" key="5"/>
<evidence type="ECO:0000312" key="6">
    <source>
        <dbReference type="Araport" id="AT1G29760"/>
    </source>
</evidence>
<evidence type="ECO:0000312" key="7">
    <source>
        <dbReference type="EMBL" id="AAG10618.1"/>
    </source>
</evidence>
<evidence type="ECO:0000312" key="8">
    <source>
        <dbReference type="Proteomes" id="UP000006548"/>
    </source>
</evidence>
<comment type="function">
    <text evidence="3">Involved in lipid metabolism and lipid droplet (LD) morphology, number, and size. Supports the formation of small-sized LDs and modulates triacylglycerol accumulation. Induces probably a reorganization of the endoplasmic reticulum into LD-forming domains.</text>
</comment>
<comment type="subcellular location">
    <subcellularLocation>
        <location evidence="3">Endoplasmic reticulum membrane</location>
        <topology evidence="1">Multi-pass membrane protein</topology>
    </subcellularLocation>
    <text evidence="3">Localized to the lipid droplet-forming sites.</text>
</comment>
<comment type="tissue specificity">
    <text evidence="3">Expressed in seeds, seedlings, leaves, stems and roots. Not detected in flowers.</text>
</comment>
<comment type="similarity">
    <text evidence="5">Belongs to the seipin family.</text>
</comment>
<comment type="sequence caution" evidence="5">
    <conflict type="erroneous gene model prediction">
        <sequence resource="EMBL-CDS" id="AAG10618"/>
    </conflict>
</comment>
<proteinExistence type="evidence at transcript level"/>
<name>SEI2_ARATH</name>
<accession>F4I340</accession>
<accession>Q9FXF3</accession>
<gene>
    <name evidence="5" type="primary">SEI2</name>
    <name evidence="6" type="ordered locus">At1g29760</name>
    <name evidence="7" type="ORF">F1N18.1</name>
</gene>